<evidence type="ECO:0000255" key="1">
    <source>
        <dbReference type="HAMAP-Rule" id="MF_00022"/>
    </source>
</evidence>
<feature type="chain" id="PRO_1000001940" description="Glutamate--tRNA ligase">
    <location>
        <begin position="1"/>
        <end position="493"/>
    </location>
</feature>
<feature type="short sequence motif" description="'HIGH' region" evidence="1">
    <location>
        <begin position="10"/>
        <end position="20"/>
    </location>
</feature>
<feature type="short sequence motif" description="'KMSKS' region" evidence="1">
    <location>
        <begin position="251"/>
        <end position="255"/>
    </location>
</feature>
<feature type="binding site" evidence="1">
    <location>
        <position position="107"/>
    </location>
    <ligand>
        <name>Zn(2+)</name>
        <dbReference type="ChEBI" id="CHEBI:29105"/>
    </ligand>
</feature>
<feature type="binding site" evidence="1">
    <location>
        <position position="109"/>
    </location>
    <ligand>
        <name>Zn(2+)</name>
        <dbReference type="ChEBI" id="CHEBI:29105"/>
    </ligand>
</feature>
<feature type="binding site" evidence="1">
    <location>
        <position position="134"/>
    </location>
    <ligand>
        <name>Zn(2+)</name>
        <dbReference type="ChEBI" id="CHEBI:29105"/>
    </ligand>
</feature>
<feature type="binding site" evidence="1">
    <location>
        <position position="136"/>
    </location>
    <ligand>
        <name>Zn(2+)</name>
        <dbReference type="ChEBI" id="CHEBI:29105"/>
    </ligand>
</feature>
<feature type="binding site" evidence="1">
    <location>
        <position position="254"/>
    </location>
    <ligand>
        <name>ATP</name>
        <dbReference type="ChEBI" id="CHEBI:30616"/>
    </ligand>
</feature>
<comment type="function">
    <text evidence="1">Catalyzes the attachment of glutamate to tRNA(Glu) in a two-step reaction: glutamate is first activated by ATP to form Glu-AMP and then transferred to the acceptor end of tRNA(Glu).</text>
</comment>
<comment type="catalytic activity">
    <reaction evidence="1">
        <text>tRNA(Glu) + L-glutamate + ATP = L-glutamyl-tRNA(Glu) + AMP + diphosphate</text>
        <dbReference type="Rhea" id="RHEA:23540"/>
        <dbReference type="Rhea" id="RHEA-COMP:9663"/>
        <dbReference type="Rhea" id="RHEA-COMP:9680"/>
        <dbReference type="ChEBI" id="CHEBI:29985"/>
        <dbReference type="ChEBI" id="CHEBI:30616"/>
        <dbReference type="ChEBI" id="CHEBI:33019"/>
        <dbReference type="ChEBI" id="CHEBI:78442"/>
        <dbReference type="ChEBI" id="CHEBI:78520"/>
        <dbReference type="ChEBI" id="CHEBI:456215"/>
        <dbReference type="EC" id="6.1.1.17"/>
    </reaction>
</comment>
<comment type="cofactor">
    <cofactor evidence="1">
        <name>Zn(2+)</name>
        <dbReference type="ChEBI" id="CHEBI:29105"/>
    </cofactor>
    <text evidence="1">Binds 1 zinc ion per subunit.</text>
</comment>
<comment type="subunit">
    <text evidence="1">Monomer.</text>
</comment>
<comment type="subcellular location">
    <subcellularLocation>
        <location evidence="1">Cytoplasm</location>
    </subcellularLocation>
</comment>
<comment type="similarity">
    <text evidence="1">Belongs to the class-I aminoacyl-tRNA synthetase family. Glutamate--tRNA ligase type 1 subfamily.</text>
</comment>
<name>SYE_ECTM1</name>
<sequence length="493" mass="56407">MTTVRTRIAPSPTGDPHVGTAYIALFNLCFARQHGGQFILRIEDTDQLRSTRESEQQIFDALRWLGIEWDEGPDVGGPHGPYRQSERGEIYKQYSDELVAKGHAFPCFCSAERLDEVRAQQMANKETPRYDGHCMHLDPAEAQRRIAAGESHVVRMKVPSEGVCVVPDMLRGDVEIPWDRMDMQVLMKADGLPTYFLANVVDDHLMGITHVLRGEEWLPSAPKLIKLYEYFGWEQPALCYMPLLRNPDKSKLSKRKNPTSITFYERMGYLPQAMLNYLGRMGWSMPDEREKFSLNEMIEHFDINRVSLGGPIFDLEKLSWLNGQWLRELPVETFAAEVQKWALNPEYLMKIAPHVQGRVETFSQIAPLAGFFFSGALNLDAKLFEHKKLSPDQVRQLMQLILWKLESLRQWEKERITGCIQAVVEHLELKLRDAMPLMFAAITGQASSVSVLDAMEILGPDLTRFRLRQALELLGGTSKKETKEWEKLLASIA</sequence>
<accession>A4XVX2</accession>
<protein>
    <recommendedName>
        <fullName evidence="1">Glutamate--tRNA ligase</fullName>
        <ecNumber evidence="1">6.1.1.17</ecNumber>
    </recommendedName>
    <alternativeName>
        <fullName evidence="1">Glutamyl-tRNA synthetase</fullName>
        <shortName evidence="1">GluRS</shortName>
    </alternativeName>
</protein>
<proteinExistence type="inferred from homology"/>
<dbReference type="EC" id="6.1.1.17" evidence="1"/>
<dbReference type="EMBL" id="CP000680">
    <property type="protein sequence ID" value="ABP85488.1"/>
    <property type="molecule type" value="Genomic_DNA"/>
</dbReference>
<dbReference type="SMR" id="A4XVX2"/>
<dbReference type="STRING" id="399739.Pmen_2733"/>
<dbReference type="KEGG" id="pmy:Pmen_2733"/>
<dbReference type="PATRIC" id="fig|399739.8.peg.2763"/>
<dbReference type="eggNOG" id="COG0008">
    <property type="taxonomic scope" value="Bacteria"/>
</dbReference>
<dbReference type="HOGENOM" id="CLU_015768_6_3_6"/>
<dbReference type="OrthoDB" id="9807503at2"/>
<dbReference type="GO" id="GO:0005829">
    <property type="term" value="C:cytosol"/>
    <property type="evidence" value="ECO:0007669"/>
    <property type="project" value="TreeGrafter"/>
</dbReference>
<dbReference type="GO" id="GO:0005524">
    <property type="term" value="F:ATP binding"/>
    <property type="evidence" value="ECO:0007669"/>
    <property type="project" value="UniProtKB-UniRule"/>
</dbReference>
<dbReference type="GO" id="GO:0004818">
    <property type="term" value="F:glutamate-tRNA ligase activity"/>
    <property type="evidence" value="ECO:0007669"/>
    <property type="project" value="UniProtKB-UniRule"/>
</dbReference>
<dbReference type="GO" id="GO:0000049">
    <property type="term" value="F:tRNA binding"/>
    <property type="evidence" value="ECO:0007669"/>
    <property type="project" value="InterPro"/>
</dbReference>
<dbReference type="GO" id="GO:0008270">
    <property type="term" value="F:zinc ion binding"/>
    <property type="evidence" value="ECO:0007669"/>
    <property type="project" value="UniProtKB-UniRule"/>
</dbReference>
<dbReference type="GO" id="GO:0006424">
    <property type="term" value="P:glutamyl-tRNA aminoacylation"/>
    <property type="evidence" value="ECO:0007669"/>
    <property type="project" value="UniProtKB-UniRule"/>
</dbReference>
<dbReference type="CDD" id="cd00808">
    <property type="entry name" value="GluRS_core"/>
    <property type="match status" value="1"/>
</dbReference>
<dbReference type="FunFam" id="1.10.10.350:FF:000007">
    <property type="entry name" value="Glutamate--tRNA ligase"/>
    <property type="match status" value="1"/>
</dbReference>
<dbReference type="FunFam" id="3.40.50.620:FF:000045">
    <property type="entry name" value="Glutamate--tRNA ligase, mitochondrial"/>
    <property type="match status" value="1"/>
</dbReference>
<dbReference type="Gene3D" id="1.10.10.350">
    <property type="match status" value="1"/>
</dbReference>
<dbReference type="Gene3D" id="3.40.50.620">
    <property type="entry name" value="HUPs"/>
    <property type="match status" value="1"/>
</dbReference>
<dbReference type="HAMAP" id="MF_00022">
    <property type="entry name" value="Glu_tRNA_synth_type1"/>
    <property type="match status" value="1"/>
</dbReference>
<dbReference type="InterPro" id="IPR045462">
    <property type="entry name" value="aa-tRNA-synth_I_cd-bd"/>
</dbReference>
<dbReference type="InterPro" id="IPR020751">
    <property type="entry name" value="aa-tRNA-synth_I_codon-bd_sub2"/>
</dbReference>
<dbReference type="InterPro" id="IPR001412">
    <property type="entry name" value="aa-tRNA-synth_I_CS"/>
</dbReference>
<dbReference type="InterPro" id="IPR008925">
    <property type="entry name" value="aa_tRNA-synth_I_cd-bd_sf"/>
</dbReference>
<dbReference type="InterPro" id="IPR004527">
    <property type="entry name" value="Glu-tRNA-ligase_bac/mito"/>
</dbReference>
<dbReference type="InterPro" id="IPR000924">
    <property type="entry name" value="Glu/Gln-tRNA-synth"/>
</dbReference>
<dbReference type="InterPro" id="IPR020058">
    <property type="entry name" value="Glu/Gln-tRNA-synth_Ib_cat-dom"/>
</dbReference>
<dbReference type="InterPro" id="IPR049940">
    <property type="entry name" value="GluQ/Sye"/>
</dbReference>
<dbReference type="InterPro" id="IPR033910">
    <property type="entry name" value="GluRS_core"/>
</dbReference>
<dbReference type="InterPro" id="IPR014729">
    <property type="entry name" value="Rossmann-like_a/b/a_fold"/>
</dbReference>
<dbReference type="NCBIfam" id="TIGR00464">
    <property type="entry name" value="gltX_bact"/>
    <property type="match status" value="1"/>
</dbReference>
<dbReference type="PANTHER" id="PTHR43311">
    <property type="entry name" value="GLUTAMATE--TRNA LIGASE"/>
    <property type="match status" value="1"/>
</dbReference>
<dbReference type="PANTHER" id="PTHR43311:SF2">
    <property type="entry name" value="GLUTAMATE--TRNA LIGASE, MITOCHONDRIAL-RELATED"/>
    <property type="match status" value="1"/>
</dbReference>
<dbReference type="Pfam" id="PF19269">
    <property type="entry name" value="Anticodon_2"/>
    <property type="match status" value="1"/>
</dbReference>
<dbReference type="Pfam" id="PF00749">
    <property type="entry name" value="tRNA-synt_1c"/>
    <property type="match status" value="1"/>
</dbReference>
<dbReference type="PRINTS" id="PR00987">
    <property type="entry name" value="TRNASYNTHGLU"/>
</dbReference>
<dbReference type="SUPFAM" id="SSF48163">
    <property type="entry name" value="An anticodon-binding domain of class I aminoacyl-tRNA synthetases"/>
    <property type="match status" value="1"/>
</dbReference>
<dbReference type="SUPFAM" id="SSF52374">
    <property type="entry name" value="Nucleotidylyl transferase"/>
    <property type="match status" value="1"/>
</dbReference>
<dbReference type="PROSITE" id="PS00178">
    <property type="entry name" value="AA_TRNA_LIGASE_I"/>
    <property type="match status" value="1"/>
</dbReference>
<gene>
    <name evidence="1" type="primary">gltX</name>
    <name type="ordered locus">Pmen_2733</name>
</gene>
<organism>
    <name type="scientific">Ectopseudomonas mendocina (strain ymp)</name>
    <name type="common">Pseudomonas mendocina</name>
    <dbReference type="NCBI Taxonomy" id="399739"/>
    <lineage>
        <taxon>Bacteria</taxon>
        <taxon>Pseudomonadati</taxon>
        <taxon>Pseudomonadota</taxon>
        <taxon>Gammaproteobacteria</taxon>
        <taxon>Pseudomonadales</taxon>
        <taxon>Pseudomonadaceae</taxon>
        <taxon>Ectopseudomonas</taxon>
    </lineage>
</organism>
<keyword id="KW-0030">Aminoacyl-tRNA synthetase</keyword>
<keyword id="KW-0067">ATP-binding</keyword>
<keyword id="KW-0963">Cytoplasm</keyword>
<keyword id="KW-0436">Ligase</keyword>
<keyword id="KW-0479">Metal-binding</keyword>
<keyword id="KW-0547">Nucleotide-binding</keyword>
<keyword id="KW-0648">Protein biosynthesis</keyword>
<keyword id="KW-0862">Zinc</keyword>
<reference key="1">
    <citation type="submission" date="2007-04" db="EMBL/GenBank/DDBJ databases">
        <title>Complete sequence of Pseudomonas mendocina ymp.</title>
        <authorList>
            <consortium name="US DOE Joint Genome Institute"/>
            <person name="Copeland A."/>
            <person name="Lucas S."/>
            <person name="Lapidus A."/>
            <person name="Barry K."/>
            <person name="Glavina del Rio T."/>
            <person name="Dalin E."/>
            <person name="Tice H."/>
            <person name="Pitluck S."/>
            <person name="Kiss H."/>
            <person name="Brettin T."/>
            <person name="Detter J.C."/>
            <person name="Bruce D."/>
            <person name="Han C."/>
            <person name="Schmutz J."/>
            <person name="Larimer F."/>
            <person name="Land M."/>
            <person name="Hauser L."/>
            <person name="Kyrpides N."/>
            <person name="Mikhailova N."/>
            <person name="Hersman L."/>
            <person name="Dubois J."/>
            <person name="Maurice P."/>
            <person name="Richardson P."/>
        </authorList>
    </citation>
    <scope>NUCLEOTIDE SEQUENCE [LARGE SCALE GENOMIC DNA]</scope>
    <source>
        <strain>ymp</strain>
    </source>
</reference>